<accession>Q62J04</accession>
<name>LOLD_BURMA</name>
<evidence type="ECO:0000255" key="1">
    <source>
        <dbReference type="HAMAP-Rule" id="MF_01708"/>
    </source>
</evidence>
<evidence type="ECO:0000305" key="2"/>
<feature type="chain" id="PRO_0000272064" description="Lipoprotein-releasing system ATP-binding protein LolD">
    <location>
        <begin position="1"/>
        <end position="249"/>
    </location>
</feature>
<feature type="domain" description="ABC transporter" evidence="1">
    <location>
        <begin position="24"/>
        <end position="249"/>
    </location>
</feature>
<feature type="binding site" evidence="1">
    <location>
        <begin position="60"/>
        <end position="67"/>
    </location>
    <ligand>
        <name>ATP</name>
        <dbReference type="ChEBI" id="CHEBI:30616"/>
    </ligand>
</feature>
<proteinExistence type="inferred from homology"/>
<sequence length="249" mass="27407">MNDRVFEQTMNQNHQDGGARECVLEARGVTKTFVQGGFNVQVLDNAQVSVRRGEKLAIVGASGSGKSTLLHVLGGLDEPSAGQVSLLGKPFTQLAERERNELRNRALGFVYQFHHLLPEFTALDNVAMPLRIRRMSTEEARRHAREMLEQVGLGARAKHRPGELSGGERQRVAIARALVTKPACVLADEPTGNLDGSTADHVFHLMLELSRTLDTSFVIVTHDPDLAARCDRILRLRDGVLHEEPAVPV</sequence>
<organism>
    <name type="scientific">Burkholderia mallei (strain ATCC 23344)</name>
    <dbReference type="NCBI Taxonomy" id="243160"/>
    <lineage>
        <taxon>Bacteria</taxon>
        <taxon>Pseudomonadati</taxon>
        <taxon>Pseudomonadota</taxon>
        <taxon>Betaproteobacteria</taxon>
        <taxon>Burkholderiales</taxon>
        <taxon>Burkholderiaceae</taxon>
        <taxon>Burkholderia</taxon>
        <taxon>pseudomallei group</taxon>
    </lineage>
</organism>
<protein>
    <recommendedName>
        <fullName evidence="1">Lipoprotein-releasing system ATP-binding protein LolD</fullName>
        <ecNumber evidence="1">7.6.2.-</ecNumber>
    </recommendedName>
</protein>
<keyword id="KW-0067">ATP-binding</keyword>
<keyword id="KW-0997">Cell inner membrane</keyword>
<keyword id="KW-1003">Cell membrane</keyword>
<keyword id="KW-0472">Membrane</keyword>
<keyword id="KW-0547">Nucleotide-binding</keyword>
<keyword id="KW-1185">Reference proteome</keyword>
<keyword id="KW-1278">Translocase</keyword>
<keyword id="KW-0813">Transport</keyword>
<dbReference type="EC" id="7.6.2.-" evidence="1"/>
<dbReference type="EMBL" id="CP000010">
    <property type="protein sequence ID" value="AAU47806.1"/>
    <property type="status" value="ALT_INIT"/>
    <property type="molecule type" value="Genomic_DNA"/>
</dbReference>
<dbReference type="RefSeq" id="WP_004195923.1">
    <property type="nucleotide sequence ID" value="NC_006348.1"/>
</dbReference>
<dbReference type="RefSeq" id="YP_103315.1">
    <property type="nucleotide sequence ID" value="NC_006348.1"/>
</dbReference>
<dbReference type="SMR" id="Q62J04"/>
<dbReference type="GeneID" id="93060833"/>
<dbReference type="KEGG" id="bma:BMA1695"/>
<dbReference type="PATRIC" id="fig|243160.12.peg.1734"/>
<dbReference type="eggNOG" id="COG1136">
    <property type="taxonomic scope" value="Bacteria"/>
</dbReference>
<dbReference type="HOGENOM" id="CLU_000604_1_22_4"/>
<dbReference type="Proteomes" id="UP000006693">
    <property type="component" value="Chromosome 1"/>
</dbReference>
<dbReference type="GO" id="GO:0005886">
    <property type="term" value="C:plasma membrane"/>
    <property type="evidence" value="ECO:0007669"/>
    <property type="project" value="UniProtKB-SubCell"/>
</dbReference>
<dbReference type="GO" id="GO:0005524">
    <property type="term" value="F:ATP binding"/>
    <property type="evidence" value="ECO:0007669"/>
    <property type="project" value="UniProtKB-KW"/>
</dbReference>
<dbReference type="GO" id="GO:0016887">
    <property type="term" value="F:ATP hydrolysis activity"/>
    <property type="evidence" value="ECO:0007669"/>
    <property type="project" value="InterPro"/>
</dbReference>
<dbReference type="GO" id="GO:0022857">
    <property type="term" value="F:transmembrane transporter activity"/>
    <property type="evidence" value="ECO:0007669"/>
    <property type="project" value="TreeGrafter"/>
</dbReference>
<dbReference type="GO" id="GO:0044874">
    <property type="term" value="P:lipoprotein localization to outer membrane"/>
    <property type="evidence" value="ECO:0007669"/>
    <property type="project" value="TreeGrafter"/>
</dbReference>
<dbReference type="GO" id="GO:0089705">
    <property type="term" value="P:protein localization to outer membrane"/>
    <property type="evidence" value="ECO:0007669"/>
    <property type="project" value="TreeGrafter"/>
</dbReference>
<dbReference type="CDD" id="cd03255">
    <property type="entry name" value="ABC_MJ0796_LolCDE_FtsE"/>
    <property type="match status" value="1"/>
</dbReference>
<dbReference type="FunFam" id="3.40.50.300:FF:000230">
    <property type="entry name" value="Lipoprotein-releasing system ATP-binding protein LolD"/>
    <property type="match status" value="1"/>
</dbReference>
<dbReference type="Gene3D" id="3.40.50.300">
    <property type="entry name" value="P-loop containing nucleotide triphosphate hydrolases"/>
    <property type="match status" value="1"/>
</dbReference>
<dbReference type="InterPro" id="IPR003593">
    <property type="entry name" value="AAA+_ATPase"/>
</dbReference>
<dbReference type="InterPro" id="IPR003439">
    <property type="entry name" value="ABC_transporter-like_ATP-bd"/>
</dbReference>
<dbReference type="InterPro" id="IPR017871">
    <property type="entry name" value="ABC_transporter-like_CS"/>
</dbReference>
<dbReference type="InterPro" id="IPR015854">
    <property type="entry name" value="ABC_transpr_LolD-like"/>
</dbReference>
<dbReference type="InterPro" id="IPR011924">
    <property type="entry name" value="LolD_lipo_ATP-bd"/>
</dbReference>
<dbReference type="InterPro" id="IPR017911">
    <property type="entry name" value="MacB-like_ATP-bd"/>
</dbReference>
<dbReference type="InterPro" id="IPR027417">
    <property type="entry name" value="P-loop_NTPase"/>
</dbReference>
<dbReference type="NCBIfam" id="TIGR02211">
    <property type="entry name" value="LolD_lipo_ex"/>
    <property type="match status" value="1"/>
</dbReference>
<dbReference type="PANTHER" id="PTHR24220">
    <property type="entry name" value="IMPORT ATP-BINDING PROTEIN"/>
    <property type="match status" value="1"/>
</dbReference>
<dbReference type="PANTHER" id="PTHR24220:SF689">
    <property type="entry name" value="LIPOPROTEIN-RELEASING SYSTEM ATP-BINDING PROTEIN LOLD"/>
    <property type="match status" value="1"/>
</dbReference>
<dbReference type="Pfam" id="PF00005">
    <property type="entry name" value="ABC_tran"/>
    <property type="match status" value="1"/>
</dbReference>
<dbReference type="SMART" id="SM00382">
    <property type="entry name" value="AAA"/>
    <property type="match status" value="1"/>
</dbReference>
<dbReference type="SUPFAM" id="SSF52540">
    <property type="entry name" value="P-loop containing nucleoside triphosphate hydrolases"/>
    <property type="match status" value="1"/>
</dbReference>
<dbReference type="PROSITE" id="PS00211">
    <property type="entry name" value="ABC_TRANSPORTER_1"/>
    <property type="match status" value="1"/>
</dbReference>
<dbReference type="PROSITE" id="PS50893">
    <property type="entry name" value="ABC_TRANSPORTER_2"/>
    <property type="match status" value="1"/>
</dbReference>
<dbReference type="PROSITE" id="PS51244">
    <property type="entry name" value="LOLD"/>
    <property type="match status" value="1"/>
</dbReference>
<reference key="1">
    <citation type="journal article" date="2004" name="Proc. Natl. Acad. Sci. U.S.A.">
        <title>Structural flexibility in the Burkholderia mallei genome.</title>
        <authorList>
            <person name="Nierman W.C."/>
            <person name="DeShazer D."/>
            <person name="Kim H.S."/>
            <person name="Tettelin H."/>
            <person name="Nelson K.E."/>
            <person name="Feldblyum T.V."/>
            <person name="Ulrich R.L."/>
            <person name="Ronning C.M."/>
            <person name="Brinkac L.M."/>
            <person name="Daugherty S.C."/>
            <person name="Davidsen T.D."/>
            <person name="DeBoy R.T."/>
            <person name="Dimitrov G."/>
            <person name="Dodson R.J."/>
            <person name="Durkin A.S."/>
            <person name="Gwinn M.L."/>
            <person name="Haft D.H."/>
            <person name="Khouri H.M."/>
            <person name="Kolonay J.F."/>
            <person name="Madupu R."/>
            <person name="Mohammoud Y."/>
            <person name="Nelson W.C."/>
            <person name="Radune D."/>
            <person name="Romero C.M."/>
            <person name="Sarria S."/>
            <person name="Selengut J."/>
            <person name="Shamblin C."/>
            <person name="Sullivan S.A."/>
            <person name="White O."/>
            <person name="Yu Y."/>
            <person name="Zafar N."/>
            <person name="Zhou L."/>
            <person name="Fraser C.M."/>
        </authorList>
    </citation>
    <scope>NUCLEOTIDE SEQUENCE [LARGE SCALE GENOMIC DNA]</scope>
    <source>
        <strain>ATCC 23344</strain>
    </source>
</reference>
<gene>
    <name evidence="1" type="primary">lolD</name>
    <name type="ordered locus">BMA1695</name>
</gene>
<comment type="function">
    <text evidence="1">Part of the ABC transporter complex LolCDE involved in the translocation of mature outer membrane-directed lipoproteins, from the inner membrane to the periplasmic chaperone, LolA. Responsible for the formation of the LolA-lipoprotein complex in an ATP-dependent manner.</text>
</comment>
<comment type="subunit">
    <text evidence="1">The complex is composed of two ATP-binding proteins (LolD) and two transmembrane proteins (LolC and LolE).</text>
</comment>
<comment type="subcellular location">
    <subcellularLocation>
        <location evidence="1">Cell inner membrane</location>
        <topology evidence="1">Peripheral membrane protein</topology>
    </subcellularLocation>
</comment>
<comment type="similarity">
    <text evidence="1">Belongs to the ABC transporter superfamily. Lipoprotein translocase (TC 3.A.1.125) family.</text>
</comment>
<comment type="sequence caution" evidence="2">
    <conflict type="erroneous initiation">
        <sequence resource="EMBL-CDS" id="AAU47806"/>
    </conflict>
</comment>